<keyword id="KW-0963">Cytoplasm</keyword>
<keyword id="KW-0456">Lyase</keyword>
<keyword id="KW-0479">Metal-binding</keyword>
<keyword id="KW-0684">Rhamnose metabolism</keyword>
<keyword id="KW-0862">Zinc</keyword>
<reference key="1">
    <citation type="journal article" date="2008" name="J. Bacteriol.">
        <title>The pangenome structure of Escherichia coli: comparative genomic analysis of E. coli commensal and pathogenic isolates.</title>
        <authorList>
            <person name="Rasko D.A."/>
            <person name="Rosovitz M.J."/>
            <person name="Myers G.S.A."/>
            <person name="Mongodin E.F."/>
            <person name="Fricke W.F."/>
            <person name="Gajer P."/>
            <person name="Crabtree J."/>
            <person name="Sebaihia M."/>
            <person name="Thomson N.R."/>
            <person name="Chaudhuri R."/>
            <person name="Henderson I.R."/>
            <person name="Sperandio V."/>
            <person name="Ravel J."/>
        </authorList>
    </citation>
    <scope>NUCLEOTIDE SEQUENCE [LARGE SCALE GENOMIC DNA]</scope>
    <source>
        <strain>HS</strain>
    </source>
</reference>
<accession>A8A705</accession>
<comment type="function">
    <text evidence="1">Catalyzes the reversible cleavage of L-rhamnulose-1-phosphate to dihydroxyacetone phosphate (DHAP) and L-lactaldehyde.</text>
</comment>
<comment type="catalytic activity">
    <reaction evidence="1">
        <text>L-rhamnulose 1-phosphate = (S)-lactaldehyde + dihydroxyacetone phosphate</text>
        <dbReference type="Rhea" id="RHEA:19689"/>
        <dbReference type="ChEBI" id="CHEBI:18041"/>
        <dbReference type="ChEBI" id="CHEBI:57642"/>
        <dbReference type="ChEBI" id="CHEBI:58313"/>
        <dbReference type="EC" id="4.1.2.19"/>
    </reaction>
</comment>
<comment type="cofactor">
    <cofactor evidence="1">
        <name>Zn(2+)</name>
        <dbReference type="ChEBI" id="CHEBI:29105"/>
    </cofactor>
    <text evidence="1">Binds 1 zinc ion per subunit.</text>
</comment>
<comment type="pathway">
    <text evidence="1">Carbohydrate degradation; L-rhamnose degradation; glycerone phosphate from L-rhamnose: step 3/3.</text>
</comment>
<comment type="subunit">
    <text evidence="1">Homotetramer.</text>
</comment>
<comment type="subcellular location">
    <subcellularLocation>
        <location evidence="1">Cytoplasm</location>
    </subcellularLocation>
</comment>
<comment type="similarity">
    <text evidence="1">Belongs to the aldolase class II family. RhaD subfamily.</text>
</comment>
<evidence type="ECO:0000255" key="1">
    <source>
        <dbReference type="HAMAP-Rule" id="MF_00770"/>
    </source>
</evidence>
<dbReference type="EC" id="4.1.2.19" evidence="1"/>
<dbReference type="EMBL" id="CP000802">
    <property type="protein sequence ID" value="ABV08309.1"/>
    <property type="molecule type" value="Genomic_DNA"/>
</dbReference>
<dbReference type="RefSeq" id="WP_001179745.1">
    <property type="nucleotide sequence ID" value="NC_009800.1"/>
</dbReference>
<dbReference type="SMR" id="A8A705"/>
<dbReference type="KEGG" id="ecx:EcHS_A4130"/>
<dbReference type="HOGENOM" id="CLU_076831_0_0_6"/>
<dbReference type="UniPathway" id="UPA00541">
    <property type="reaction ID" value="UER00603"/>
</dbReference>
<dbReference type="GO" id="GO:0005829">
    <property type="term" value="C:cytosol"/>
    <property type="evidence" value="ECO:0007669"/>
    <property type="project" value="TreeGrafter"/>
</dbReference>
<dbReference type="GO" id="GO:0046872">
    <property type="term" value="F:metal ion binding"/>
    <property type="evidence" value="ECO:0007669"/>
    <property type="project" value="UniProtKB-KW"/>
</dbReference>
<dbReference type="GO" id="GO:0008994">
    <property type="term" value="F:rhamnulose-1-phosphate aldolase activity"/>
    <property type="evidence" value="ECO:0007669"/>
    <property type="project" value="UniProtKB-UniRule"/>
</dbReference>
<dbReference type="GO" id="GO:0019323">
    <property type="term" value="P:pentose catabolic process"/>
    <property type="evidence" value="ECO:0007669"/>
    <property type="project" value="TreeGrafter"/>
</dbReference>
<dbReference type="GO" id="GO:0019301">
    <property type="term" value="P:rhamnose catabolic process"/>
    <property type="evidence" value="ECO:0007669"/>
    <property type="project" value="UniProtKB-UniRule"/>
</dbReference>
<dbReference type="CDD" id="cd00398">
    <property type="entry name" value="Aldolase_II"/>
    <property type="match status" value="1"/>
</dbReference>
<dbReference type="FunFam" id="3.40.225.10:FF:000006">
    <property type="entry name" value="Rhamnulose-1-phosphate aldolase"/>
    <property type="match status" value="1"/>
</dbReference>
<dbReference type="Gene3D" id="3.40.225.10">
    <property type="entry name" value="Class II aldolase/adducin N-terminal domain"/>
    <property type="match status" value="1"/>
</dbReference>
<dbReference type="HAMAP" id="MF_00770">
    <property type="entry name" value="RhaD"/>
    <property type="match status" value="1"/>
</dbReference>
<dbReference type="InterPro" id="IPR050197">
    <property type="entry name" value="Aldolase_class_II_sugar_metab"/>
</dbReference>
<dbReference type="InterPro" id="IPR001303">
    <property type="entry name" value="Aldolase_II/adducin_N"/>
</dbReference>
<dbReference type="InterPro" id="IPR036409">
    <property type="entry name" value="Aldolase_II/adducin_N_sf"/>
</dbReference>
<dbReference type="InterPro" id="IPR013447">
    <property type="entry name" value="Rhamnulose-1-P_Aldolase"/>
</dbReference>
<dbReference type="NCBIfam" id="NF002963">
    <property type="entry name" value="PRK03634.1"/>
    <property type="match status" value="1"/>
</dbReference>
<dbReference type="NCBIfam" id="TIGR02624">
    <property type="entry name" value="rhamnu_1P_ald"/>
    <property type="match status" value="1"/>
</dbReference>
<dbReference type="PANTHER" id="PTHR22789">
    <property type="entry name" value="FUCULOSE PHOSPHATE ALDOLASE"/>
    <property type="match status" value="1"/>
</dbReference>
<dbReference type="PANTHER" id="PTHR22789:SF16">
    <property type="entry name" value="RHAMNULOSE-1-PHOSPHATE ALDOLASE"/>
    <property type="match status" value="1"/>
</dbReference>
<dbReference type="Pfam" id="PF00596">
    <property type="entry name" value="Aldolase_II"/>
    <property type="match status" value="1"/>
</dbReference>
<dbReference type="SMART" id="SM01007">
    <property type="entry name" value="Aldolase_II"/>
    <property type="match status" value="1"/>
</dbReference>
<dbReference type="SUPFAM" id="SSF53639">
    <property type="entry name" value="AraD/HMP-PK domain-like"/>
    <property type="match status" value="1"/>
</dbReference>
<gene>
    <name evidence="1" type="primary">rhaD</name>
    <name type="ordered locus">EcHS_A4130</name>
</gene>
<sequence length="274" mass="30145">MQNITQSWFVQGMIKATTDAWLKGWDERNGGNLTLRLDDADIAPYHDNFHQQPRYIPLSQPMPLLANTPFIVTGSGKFFRNVQLDPAANLGIVKVDSDGAGYHILWGLTNEAVPTSELPAHFLSHCERIKATNGKDRVIMHCHATNLIALTYVLENDTAVFTRQLWEGSTECLVVFPDGVGILPWMVPGTDEIGQATAQEMQKHSLVLWPFHGVFGSGPTLDETFGLIDTAEKSAQVLVKVYSMGGMKQTISREELIALGKRFGVTPLASALAL</sequence>
<organism>
    <name type="scientific">Escherichia coli O9:H4 (strain HS)</name>
    <dbReference type="NCBI Taxonomy" id="331112"/>
    <lineage>
        <taxon>Bacteria</taxon>
        <taxon>Pseudomonadati</taxon>
        <taxon>Pseudomonadota</taxon>
        <taxon>Gammaproteobacteria</taxon>
        <taxon>Enterobacterales</taxon>
        <taxon>Enterobacteriaceae</taxon>
        <taxon>Escherichia</taxon>
    </lineage>
</organism>
<protein>
    <recommendedName>
        <fullName evidence="1">Rhamnulose-1-phosphate aldolase</fullName>
        <ecNumber evidence="1">4.1.2.19</ecNumber>
    </recommendedName>
</protein>
<feature type="chain" id="PRO_1000062239" description="Rhamnulose-1-phosphate aldolase">
    <location>
        <begin position="1"/>
        <end position="274"/>
    </location>
</feature>
<feature type="active site" evidence="1">
    <location>
        <position position="117"/>
    </location>
</feature>
<feature type="binding site" evidence="1">
    <location>
        <position position="141"/>
    </location>
    <ligand>
        <name>Zn(2+)</name>
        <dbReference type="ChEBI" id="CHEBI:29105"/>
    </ligand>
</feature>
<feature type="binding site" evidence="1">
    <location>
        <position position="143"/>
    </location>
    <ligand>
        <name>Zn(2+)</name>
        <dbReference type="ChEBI" id="CHEBI:29105"/>
    </ligand>
</feature>
<feature type="binding site" evidence="1">
    <location>
        <position position="212"/>
    </location>
    <ligand>
        <name>Zn(2+)</name>
        <dbReference type="ChEBI" id="CHEBI:29105"/>
    </ligand>
</feature>
<name>RHAD_ECOHS</name>
<proteinExistence type="inferred from homology"/>